<organism>
    <name type="scientific">Leptospira borgpetersenii serovar Hardjo-bovis (strain L550)</name>
    <dbReference type="NCBI Taxonomy" id="355276"/>
    <lineage>
        <taxon>Bacteria</taxon>
        <taxon>Pseudomonadati</taxon>
        <taxon>Spirochaetota</taxon>
        <taxon>Spirochaetia</taxon>
        <taxon>Leptospirales</taxon>
        <taxon>Leptospiraceae</taxon>
        <taxon>Leptospira</taxon>
    </lineage>
</organism>
<reference key="1">
    <citation type="journal article" date="2006" name="Proc. Natl. Acad. Sci. U.S.A.">
        <title>Genome reduction in Leptospira borgpetersenii reflects limited transmission potential.</title>
        <authorList>
            <person name="Bulach D.M."/>
            <person name="Zuerner R.L."/>
            <person name="Wilson P."/>
            <person name="Seemann T."/>
            <person name="McGrath A."/>
            <person name="Cullen P.A."/>
            <person name="Davis J."/>
            <person name="Johnson M."/>
            <person name="Kuczek E."/>
            <person name="Alt D.P."/>
            <person name="Peterson-Burch B."/>
            <person name="Coppel R.L."/>
            <person name="Rood J.I."/>
            <person name="Davies J.K."/>
            <person name="Adler B."/>
        </authorList>
    </citation>
    <scope>NUCLEOTIDE SEQUENCE [LARGE SCALE GENOMIC DNA]</scope>
    <source>
        <strain>L550</strain>
    </source>
</reference>
<name>MUTL_LEPBL</name>
<keyword id="KW-0227">DNA damage</keyword>
<keyword id="KW-0234">DNA repair</keyword>
<comment type="function">
    <text evidence="1">This protein is involved in the repair of mismatches in DNA. It is required for dam-dependent methyl-directed DNA mismatch repair. May act as a 'molecular matchmaker', a protein that promotes the formation of a stable complex between two or more DNA-binding proteins in an ATP-dependent manner without itself being part of a final effector complex.</text>
</comment>
<comment type="similarity">
    <text evidence="1">Belongs to the DNA mismatch repair MutL/HexB family.</text>
</comment>
<feature type="chain" id="PRO_1000010038" description="DNA mismatch repair protein MutL">
    <location>
        <begin position="1"/>
        <end position="596"/>
    </location>
</feature>
<evidence type="ECO:0000255" key="1">
    <source>
        <dbReference type="HAMAP-Rule" id="MF_00149"/>
    </source>
</evidence>
<protein>
    <recommendedName>
        <fullName evidence="1">DNA mismatch repair protein MutL</fullName>
    </recommendedName>
</protein>
<accession>Q04Z69</accession>
<dbReference type="EMBL" id="CP000348">
    <property type="protein sequence ID" value="ABJ79626.1"/>
    <property type="molecule type" value="Genomic_DNA"/>
</dbReference>
<dbReference type="RefSeq" id="WP_011670650.1">
    <property type="nucleotide sequence ID" value="NC_008508.1"/>
</dbReference>
<dbReference type="SMR" id="Q04Z69"/>
<dbReference type="KEGG" id="lbl:LBL_2218"/>
<dbReference type="HOGENOM" id="CLU_004131_4_2_12"/>
<dbReference type="GO" id="GO:0032300">
    <property type="term" value="C:mismatch repair complex"/>
    <property type="evidence" value="ECO:0007669"/>
    <property type="project" value="InterPro"/>
</dbReference>
<dbReference type="GO" id="GO:0005524">
    <property type="term" value="F:ATP binding"/>
    <property type="evidence" value="ECO:0007669"/>
    <property type="project" value="InterPro"/>
</dbReference>
<dbReference type="GO" id="GO:0016887">
    <property type="term" value="F:ATP hydrolysis activity"/>
    <property type="evidence" value="ECO:0007669"/>
    <property type="project" value="InterPro"/>
</dbReference>
<dbReference type="GO" id="GO:0140664">
    <property type="term" value="F:ATP-dependent DNA damage sensor activity"/>
    <property type="evidence" value="ECO:0007669"/>
    <property type="project" value="InterPro"/>
</dbReference>
<dbReference type="GO" id="GO:0030983">
    <property type="term" value="F:mismatched DNA binding"/>
    <property type="evidence" value="ECO:0007669"/>
    <property type="project" value="InterPro"/>
</dbReference>
<dbReference type="GO" id="GO:0006298">
    <property type="term" value="P:mismatch repair"/>
    <property type="evidence" value="ECO:0007669"/>
    <property type="project" value="UniProtKB-UniRule"/>
</dbReference>
<dbReference type="CDD" id="cd16926">
    <property type="entry name" value="HATPase_MutL-MLH-PMS-like"/>
    <property type="match status" value="1"/>
</dbReference>
<dbReference type="CDD" id="cd00782">
    <property type="entry name" value="MutL_Trans"/>
    <property type="match status" value="1"/>
</dbReference>
<dbReference type="FunFam" id="3.30.565.10:FF:000003">
    <property type="entry name" value="DNA mismatch repair endonuclease MutL"/>
    <property type="match status" value="1"/>
</dbReference>
<dbReference type="Gene3D" id="3.30.230.10">
    <property type="match status" value="1"/>
</dbReference>
<dbReference type="Gene3D" id="3.30.565.10">
    <property type="entry name" value="Histidine kinase-like ATPase, C-terminal domain"/>
    <property type="match status" value="1"/>
</dbReference>
<dbReference type="Gene3D" id="3.30.1540.20">
    <property type="entry name" value="MutL, C-terminal domain, dimerisation subdomain"/>
    <property type="match status" value="1"/>
</dbReference>
<dbReference type="Gene3D" id="3.30.1370.100">
    <property type="entry name" value="MutL, C-terminal domain, regulatory subdomain"/>
    <property type="match status" value="1"/>
</dbReference>
<dbReference type="HAMAP" id="MF_00149">
    <property type="entry name" value="DNA_mis_repair"/>
    <property type="match status" value="1"/>
</dbReference>
<dbReference type="InterPro" id="IPR014762">
    <property type="entry name" value="DNA_mismatch_repair_CS"/>
</dbReference>
<dbReference type="InterPro" id="IPR020667">
    <property type="entry name" value="DNA_mismatch_repair_MutL"/>
</dbReference>
<dbReference type="InterPro" id="IPR013507">
    <property type="entry name" value="DNA_mismatch_S5_2-like"/>
</dbReference>
<dbReference type="InterPro" id="IPR036890">
    <property type="entry name" value="HATPase_C_sf"/>
</dbReference>
<dbReference type="InterPro" id="IPR002099">
    <property type="entry name" value="MutL/Mlh/PMS"/>
</dbReference>
<dbReference type="InterPro" id="IPR038973">
    <property type="entry name" value="MutL/Mlh/Pms-like"/>
</dbReference>
<dbReference type="InterPro" id="IPR014790">
    <property type="entry name" value="MutL_C"/>
</dbReference>
<dbReference type="InterPro" id="IPR042120">
    <property type="entry name" value="MutL_C_dimsub"/>
</dbReference>
<dbReference type="InterPro" id="IPR042121">
    <property type="entry name" value="MutL_C_regsub"/>
</dbReference>
<dbReference type="InterPro" id="IPR037198">
    <property type="entry name" value="MutL_C_sf"/>
</dbReference>
<dbReference type="InterPro" id="IPR020568">
    <property type="entry name" value="Ribosomal_Su5_D2-typ_SF"/>
</dbReference>
<dbReference type="InterPro" id="IPR014721">
    <property type="entry name" value="Ribsml_uS5_D2-typ_fold_subgr"/>
</dbReference>
<dbReference type="NCBIfam" id="TIGR00585">
    <property type="entry name" value="mutl"/>
    <property type="match status" value="1"/>
</dbReference>
<dbReference type="PANTHER" id="PTHR10073">
    <property type="entry name" value="DNA MISMATCH REPAIR PROTEIN MLH, PMS, MUTL"/>
    <property type="match status" value="1"/>
</dbReference>
<dbReference type="PANTHER" id="PTHR10073:SF12">
    <property type="entry name" value="DNA MISMATCH REPAIR PROTEIN MLH1"/>
    <property type="match status" value="1"/>
</dbReference>
<dbReference type="Pfam" id="PF01119">
    <property type="entry name" value="DNA_mis_repair"/>
    <property type="match status" value="1"/>
</dbReference>
<dbReference type="Pfam" id="PF13589">
    <property type="entry name" value="HATPase_c_3"/>
    <property type="match status" value="1"/>
</dbReference>
<dbReference type="Pfam" id="PF08676">
    <property type="entry name" value="MutL_C"/>
    <property type="match status" value="1"/>
</dbReference>
<dbReference type="SMART" id="SM01340">
    <property type="entry name" value="DNA_mis_repair"/>
    <property type="match status" value="1"/>
</dbReference>
<dbReference type="SMART" id="SM00853">
    <property type="entry name" value="MutL_C"/>
    <property type="match status" value="1"/>
</dbReference>
<dbReference type="SUPFAM" id="SSF55874">
    <property type="entry name" value="ATPase domain of HSP90 chaperone/DNA topoisomerase II/histidine kinase"/>
    <property type="match status" value="1"/>
</dbReference>
<dbReference type="SUPFAM" id="SSF118116">
    <property type="entry name" value="DNA mismatch repair protein MutL"/>
    <property type="match status" value="1"/>
</dbReference>
<dbReference type="SUPFAM" id="SSF54211">
    <property type="entry name" value="Ribosomal protein S5 domain 2-like"/>
    <property type="match status" value="1"/>
</dbReference>
<dbReference type="PROSITE" id="PS00058">
    <property type="entry name" value="DNA_MISMATCH_REPAIR_1"/>
    <property type="match status" value="1"/>
</dbReference>
<proteinExistence type="inferred from homology"/>
<sequence length="596" mass="67762">MGKIQELSPELINQIAAGEVIESAHSVVKELMENSMDAGATQMDIESKDGGLSLLRITDNGSGIDPEDIEPALKRHATSKIRDYGDLENVLSYGFRGEALASIASVSRLTLESGIKNQKTAWKICSIGGKISEKEEIPGFVGTKILVEELFFNTPVRRKFLKSVRSEDKKIRDRVTTQALARHDVRFRLFQDGKEVFVLPSRENKKDRIVDLFGENFRDHLLEVSLERGGLNATGYISDPDFYKSNRTGQFVFVNGRPVEIKYGSTLLKKAYDELLPPNGHPYCFLFFEIDPSRVDVNVHPAKKEIRFLDEEGFNGFFLTLIQKELRSSTPVSFLELKKRLLRPTPETFKTSSLYQAHSSSRSGESPLLSRELFTEVPRQEGFDLDRMGPGASLSALTDNVVKHSSFVPKKHFGVLFETFILAEAEDGFYIIDQHTAHERIRYEEVLRKLEKKNYGIQPLLTPIRIDVSKQEQEDILNRKKEYEEVGIFLDPLGEDSVVLREIPAYMEPGEEKEIILDFLNRTEGKETTEPELYDLMAKCVACRSAIKKGDHLSDPILAEILNRLSYCENPSRCPHGRPTLVKLSRDDLERMFHRK</sequence>
<gene>
    <name evidence="1" type="primary">mutL</name>
    <name type="ordered locus">LBL_2218</name>
</gene>